<sequence length="355" mass="39502">MENKRKQKDEIVLVNGSNDTTPNKKQKNELQVVSSGGGREIILGTERTSKLEHPIMQLIGHKGEIYSCKFNSYGTALASGGSDKEIFLWNVYGECINYSVLKGHKGTILELHWSTDSNEIYTACTDKSIGVWDSNKGELIKRIREHSGVVNSCCPARRGPPLVASGSDDRSARIFDTRSKGSTHLFQHKYPVTSVCFSDASDQLITGGIDNVIRVWDIRNQEDPLYTLASHQDTITSTSVSKDGAYLLSNSMDNSCKIWDIRPYAPPNRNIKTFNGAQNNFEKNLIKSSWSIDGRRIGCGSSDRQVYIWDTNTKQLQYCLPGHSGTVNEVTFHPNEPIIASCSSDKTIYLGEIKP</sequence>
<proteinExistence type="inferred from homology"/>
<accession>Q55AR8</accession>
<accession>Q86HI6</accession>
<feature type="chain" id="PRO_0000330843" description="U5 small nuclear ribonucleoprotein 40 kDa protein">
    <location>
        <begin position="1"/>
        <end position="355"/>
    </location>
</feature>
<feature type="repeat" description="WD 1">
    <location>
        <begin position="60"/>
        <end position="99"/>
    </location>
</feature>
<feature type="repeat" description="WD 2">
    <location>
        <begin position="103"/>
        <end position="142"/>
    </location>
</feature>
<feature type="repeat" description="WD 3">
    <location>
        <begin position="145"/>
        <end position="185"/>
    </location>
</feature>
<feature type="repeat" description="WD 4">
    <location>
        <begin position="187"/>
        <end position="226"/>
    </location>
</feature>
<feature type="repeat" description="WD 5">
    <location>
        <begin position="230"/>
        <end position="269"/>
    </location>
</feature>
<feature type="repeat" description="WD 6">
    <location>
        <begin position="280"/>
        <end position="319"/>
    </location>
</feature>
<feature type="repeat" description="WD 7">
    <location>
        <begin position="322"/>
        <end position="355"/>
    </location>
</feature>
<comment type="function">
    <text evidence="1">Required for pre-mRNA splicing as component of the activated spliceosome. Component of the U5 small nuclear ribonucleoprotein (snRNP) complex and the U4/U6-U5 tri-snRNP complex, building blocks of the spliceosome.</text>
</comment>
<comment type="subunit">
    <text evidence="1">Component of the pre-catalytic and catalytic spliceosome complexes. Component of the postcatalytic spliceosome P complex. Part of the U5 snRNP complex. Component of the U4/U6-U5 tri-snRNP complex.</text>
</comment>
<comment type="subcellular location">
    <subcellularLocation>
        <location evidence="1">Nucleus</location>
    </subcellularLocation>
</comment>
<evidence type="ECO:0000250" key="1">
    <source>
        <dbReference type="UniProtKB" id="Q96DI7"/>
    </source>
</evidence>
<protein>
    <recommendedName>
        <fullName>U5 small nuclear ribonucleoprotein 40 kDa protein</fullName>
        <shortName>U5 snRNP 40 kDa protein</shortName>
    </recommendedName>
    <alternativeName>
        <fullName>WD repeat-containing protein 57 homolog</fullName>
    </alternativeName>
</protein>
<name>SNR40_DICDI</name>
<gene>
    <name type="primary">snrnp40</name>
    <name type="synonym">wdr57</name>
    <name type="ORF">DDB_G0271788</name>
</gene>
<reference key="1">
    <citation type="journal article" date="2002" name="Nature">
        <title>Sequence and analysis of chromosome 2 of Dictyostelium discoideum.</title>
        <authorList>
            <person name="Gloeckner G."/>
            <person name="Eichinger L."/>
            <person name="Szafranski K."/>
            <person name="Pachebat J.A."/>
            <person name="Bankier A.T."/>
            <person name="Dear P.H."/>
            <person name="Lehmann R."/>
            <person name="Baumgart C."/>
            <person name="Parra G."/>
            <person name="Abril J.F."/>
            <person name="Guigo R."/>
            <person name="Kumpf K."/>
            <person name="Tunggal B."/>
            <person name="Cox E.C."/>
            <person name="Quail M.A."/>
            <person name="Platzer M."/>
            <person name="Rosenthal A."/>
            <person name="Noegel A.A."/>
        </authorList>
    </citation>
    <scope>NUCLEOTIDE SEQUENCE [LARGE SCALE GENOMIC DNA]</scope>
    <source>
        <strain>AX4</strain>
    </source>
</reference>
<reference key="2">
    <citation type="journal article" date="2005" name="Nature">
        <title>The genome of the social amoeba Dictyostelium discoideum.</title>
        <authorList>
            <person name="Eichinger L."/>
            <person name="Pachebat J.A."/>
            <person name="Gloeckner G."/>
            <person name="Rajandream M.A."/>
            <person name="Sucgang R."/>
            <person name="Berriman M."/>
            <person name="Song J."/>
            <person name="Olsen R."/>
            <person name="Szafranski K."/>
            <person name="Xu Q."/>
            <person name="Tunggal B."/>
            <person name="Kummerfeld S."/>
            <person name="Madera M."/>
            <person name="Konfortov B.A."/>
            <person name="Rivero F."/>
            <person name="Bankier A.T."/>
            <person name="Lehmann R."/>
            <person name="Hamlin N."/>
            <person name="Davies R."/>
            <person name="Gaudet P."/>
            <person name="Fey P."/>
            <person name="Pilcher K."/>
            <person name="Chen G."/>
            <person name="Saunders D."/>
            <person name="Sodergren E.J."/>
            <person name="Davis P."/>
            <person name="Kerhornou A."/>
            <person name="Nie X."/>
            <person name="Hall N."/>
            <person name="Anjard C."/>
            <person name="Hemphill L."/>
            <person name="Bason N."/>
            <person name="Farbrother P."/>
            <person name="Desany B."/>
            <person name="Just E."/>
            <person name="Morio T."/>
            <person name="Rost R."/>
            <person name="Churcher C.M."/>
            <person name="Cooper J."/>
            <person name="Haydock S."/>
            <person name="van Driessche N."/>
            <person name="Cronin A."/>
            <person name="Goodhead I."/>
            <person name="Muzny D.M."/>
            <person name="Mourier T."/>
            <person name="Pain A."/>
            <person name="Lu M."/>
            <person name="Harper D."/>
            <person name="Lindsay R."/>
            <person name="Hauser H."/>
            <person name="James K.D."/>
            <person name="Quiles M."/>
            <person name="Madan Babu M."/>
            <person name="Saito T."/>
            <person name="Buchrieser C."/>
            <person name="Wardroper A."/>
            <person name="Felder M."/>
            <person name="Thangavelu M."/>
            <person name="Johnson D."/>
            <person name="Knights A."/>
            <person name="Loulseged H."/>
            <person name="Mungall K.L."/>
            <person name="Oliver K."/>
            <person name="Price C."/>
            <person name="Quail M.A."/>
            <person name="Urushihara H."/>
            <person name="Hernandez J."/>
            <person name="Rabbinowitsch E."/>
            <person name="Steffen D."/>
            <person name="Sanders M."/>
            <person name="Ma J."/>
            <person name="Kohara Y."/>
            <person name="Sharp S."/>
            <person name="Simmonds M.N."/>
            <person name="Spiegler S."/>
            <person name="Tivey A."/>
            <person name="Sugano S."/>
            <person name="White B."/>
            <person name="Walker D."/>
            <person name="Woodward J.R."/>
            <person name="Winckler T."/>
            <person name="Tanaka Y."/>
            <person name="Shaulsky G."/>
            <person name="Schleicher M."/>
            <person name="Weinstock G.M."/>
            <person name="Rosenthal A."/>
            <person name="Cox E.C."/>
            <person name="Chisholm R.L."/>
            <person name="Gibbs R.A."/>
            <person name="Loomis W.F."/>
            <person name="Platzer M."/>
            <person name="Kay R.R."/>
            <person name="Williams J.G."/>
            <person name="Dear P.H."/>
            <person name="Noegel A.A."/>
            <person name="Barrell B.G."/>
            <person name="Kuspa A."/>
        </authorList>
    </citation>
    <scope>NUCLEOTIDE SEQUENCE [LARGE SCALE GENOMIC DNA]</scope>
    <source>
        <strain>AX4</strain>
    </source>
</reference>
<keyword id="KW-0507">mRNA processing</keyword>
<keyword id="KW-0508">mRNA splicing</keyword>
<keyword id="KW-0539">Nucleus</keyword>
<keyword id="KW-1185">Reference proteome</keyword>
<keyword id="KW-0677">Repeat</keyword>
<keyword id="KW-0747">Spliceosome</keyword>
<keyword id="KW-0853">WD repeat</keyword>
<organism>
    <name type="scientific">Dictyostelium discoideum</name>
    <name type="common">Social amoeba</name>
    <dbReference type="NCBI Taxonomy" id="44689"/>
    <lineage>
        <taxon>Eukaryota</taxon>
        <taxon>Amoebozoa</taxon>
        <taxon>Evosea</taxon>
        <taxon>Eumycetozoa</taxon>
        <taxon>Dictyostelia</taxon>
        <taxon>Dictyosteliales</taxon>
        <taxon>Dictyosteliaceae</taxon>
        <taxon>Dictyostelium</taxon>
    </lineage>
</organism>
<dbReference type="EMBL" id="AAFI02000006">
    <property type="protein sequence ID" value="EAL71584.1"/>
    <property type="molecule type" value="Genomic_DNA"/>
</dbReference>
<dbReference type="RefSeq" id="XP_645454.1">
    <property type="nucleotide sequence ID" value="XM_640362.1"/>
</dbReference>
<dbReference type="SMR" id="Q55AR8"/>
<dbReference type="FunCoup" id="Q55AR8">
    <property type="interactions" value="1520"/>
</dbReference>
<dbReference type="STRING" id="44689.Q55AR8"/>
<dbReference type="PaxDb" id="44689-DDB0233518"/>
<dbReference type="EnsemblProtists" id="EAL71584">
    <property type="protein sequence ID" value="EAL71584"/>
    <property type="gene ID" value="DDB_G0271788"/>
</dbReference>
<dbReference type="GeneID" id="8618082"/>
<dbReference type="KEGG" id="ddi:DDB_G0271788"/>
<dbReference type="dictyBase" id="DDB_G0271788">
    <property type="gene designation" value="wdr57"/>
</dbReference>
<dbReference type="VEuPathDB" id="AmoebaDB:DDB_G0271788"/>
<dbReference type="eggNOG" id="KOG0265">
    <property type="taxonomic scope" value="Eukaryota"/>
</dbReference>
<dbReference type="HOGENOM" id="CLU_000288_57_2_1"/>
<dbReference type="InParanoid" id="Q55AR8"/>
<dbReference type="OMA" id="IWDIRPY"/>
<dbReference type="PhylomeDB" id="Q55AR8"/>
<dbReference type="Reactome" id="R-DDI-72163">
    <property type="pathway name" value="mRNA Splicing - Major Pathway"/>
</dbReference>
<dbReference type="PRO" id="PR:Q55AR8"/>
<dbReference type="Proteomes" id="UP000002195">
    <property type="component" value="Chromosome 2"/>
</dbReference>
<dbReference type="GO" id="GO:0071013">
    <property type="term" value="C:catalytic step 2 spliceosome"/>
    <property type="evidence" value="ECO:0000318"/>
    <property type="project" value="GO_Central"/>
</dbReference>
<dbReference type="GO" id="GO:0005634">
    <property type="term" value="C:nucleus"/>
    <property type="evidence" value="ECO:0000250"/>
    <property type="project" value="dictyBase"/>
</dbReference>
<dbReference type="GO" id="GO:0006397">
    <property type="term" value="P:mRNA processing"/>
    <property type="evidence" value="ECO:0007669"/>
    <property type="project" value="UniProtKB-KW"/>
</dbReference>
<dbReference type="GO" id="GO:0008380">
    <property type="term" value="P:RNA splicing"/>
    <property type="evidence" value="ECO:0007669"/>
    <property type="project" value="UniProtKB-KW"/>
</dbReference>
<dbReference type="CDD" id="cd00200">
    <property type="entry name" value="WD40"/>
    <property type="match status" value="1"/>
</dbReference>
<dbReference type="FunFam" id="2.130.10.10:FF:000229">
    <property type="entry name" value="Small nuclear ribonucleoprotein U5 subunit 40"/>
    <property type="match status" value="1"/>
</dbReference>
<dbReference type="Gene3D" id="2.130.10.10">
    <property type="entry name" value="YVTN repeat-like/Quinoprotein amine dehydrogenase"/>
    <property type="match status" value="1"/>
</dbReference>
<dbReference type="InterPro" id="IPR020472">
    <property type="entry name" value="G-protein_beta_WD-40_rep"/>
</dbReference>
<dbReference type="InterPro" id="IPR052234">
    <property type="entry name" value="U5_snRNP_Component"/>
</dbReference>
<dbReference type="InterPro" id="IPR015943">
    <property type="entry name" value="WD40/YVTN_repeat-like_dom_sf"/>
</dbReference>
<dbReference type="InterPro" id="IPR019775">
    <property type="entry name" value="WD40_repeat_CS"/>
</dbReference>
<dbReference type="InterPro" id="IPR036322">
    <property type="entry name" value="WD40_repeat_dom_sf"/>
</dbReference>
<dbReference type="InterPro" id="IPR001680">
    <property type="entry name" value="WD40_rpt"/>
</dbReference>
<dbReference type="PANTHER" id="PTHR44006">
    <property type="entry name" value="U5 SMALL NUCLEAR RIBONUCLEOPROTEIN 40 KDA PROTEIN"/>
    <property type="match status" value="1"/>
</dbReference>
<dbReference type="PANTHER" id="PTHR44006:SF1">
    <property type="entry name" value="U5 SMALL NUCLEAR RIBONUCLEOPROTEIN 40 KDA PROTEIN"/>
    <property type="match status" value="1"/>
</dbReference>
<dbReference type="Pfam" id="PF00400">
    <property type="entry name" value="WD40"/>
    <property type="match status" value="7"/>
</dbReference>
<dbReference type="PRINTS" id="PR00320">
    <property type="entry name" value="GPROTEINBRPT"/>
</dbReference>
<dbReference type="SMART" id="SM00320">
    <property type="entry name" value="WD40"/>
    <property type="match status" value="7"/>
</dbReference>
<dbReference type="SUPFAM" id="SSF50978">
    <property type="entry name" value="WD40 repeat-like"/>
    <property type="match status" value="1"/>
</dbReference>
<dbReference type="PROSITE" id="PS00678">
    <property type="entry name" value="WD_REPEATS_1"/>
    <property type="match status" value="3"/>
</dbReference>
<dbReference type="PROSITE" id="PS50082">
    <property type="entry name" value="WD_REPEATS_2"/>
    <property type="match status" value="5"/>
</dbReference>
<dbReference type="PROSITE" id="PS50294">
    <property type="entry name" value="WD_REPEATS_REGION"/>
    <property type="match status" value="1"/>
</dbReference>